<feature type="chain" id="PRO_0000119103" description="Kelch-like protein 3">
    <location>
        <begin position="1"/>
        <end position="587"/>
    </location>
</feature>
<feature type="domain" description="BTB" evidence="2">
    <location>
        <begin position="50"/>
        <end position="117"/>
    </location>
</feature>
<feature type="domain" description="BACK">
    <location>
        <begin position="152"/>
        <end position="254"/>
    </location>
</feature>
<feature type="repeat" description="Kelch 1">
    <location>
        <begin position="302"/>
        <end position="347"/>
    </location>
</feature>
<feature type="repeat" description="Kelch 2">
    <location>
        <begin position="348"/>
        <end position="394"/>
    </location>
</feature>
<feature type="repeat" description="Kelch 3">
    <location>
        <begin position="396"/>
        <end position="441"/>
    </location>
</feature>
<feature type="repeat" description="Kelch 4">
    <location>
        <begin position="442"/>
        <end position="490"/>
    </location>
</feature>
<feature type="repeat" description="Kelch 5">
    <location>
        <begin position="491"/>
        <end position="537"/>
    </location>
</feature>
<feature type="repeat" description="Kelch 6">
    <location>
        <begin position="539"/>
        <end position="585"/>
    </location>
</feature>
<feature type="modified residue" description="Phosphoserine" evidence="12">
    <location>
        <position position="10"/>
    </location>
</feature>
<feature type="modified residue" description="Phosphothreonine" evidence="12">
    <location>
        <position position="295"/>
    </location>
</feature>
<feature type="modified residue" description="Phosphothreonine" evidence="12">
    <location>
        <position position="375"/>
    </location>
</feature>
<feature type="modified residue" description="Phosphoserine" evidence="12">
    <location>
        <position position="376"/>
    </location>
</feature>
<feature type="modified residue" description="Phosphoserine; by PKA and PKC" evidence="11 12 14 18">
    <location>
        <position position="433"/>
    </location>
</feature>
<feature type="splice variant" id="VSP_002817" description="In isoform C." evidence="23">
    <location>
        <begin position="1"/>
        <end position="82"/>
    </location>
</feature>
<feature type="splice variant" id="VSP_002816" description="In isoform B." evidence="23">
    <location>
        <begin position="1"/>
        <end position="32"/>
    </location>
</feature>
<feature type="sequence variant" id="VAR_067501" description="In PHA2D; impaired interaction with CUL3; dbSNP:rs199469623." evidence="4 6 10">
    <original>A</original>
    <variation>E</variation>
    <location>
        <position position="77"/>
    </location>
</feature>
<feature type="sequence variant" id="VAR_067502" description="In PHA2D; impaired interaction with CUL3; dbSNP:rs199469624." evidence="4 6">
    <original>M</original>
    <variation>V</variation>
    <location>
        <position position="78"/>
    </location>
</feature>
<feature type="sequence variant" id="VAR_067503" description="In PHA2D; impaired interaction with CUL3; dbSNP:rs199469625." evidence="4 6">
    <original>E</original>
    <variation>A</variation>
    <location>
        <position position="85"/>
    </location>
</feature>
<feature type="sequence variant" id="VAR_088176" description="In PHA2D; dbSNP:rs1229419091." evidence="19">
    <original>T</original>
    <variation>A</variation>
    <location>
        <position position="110"/>
    </location>
</feature>
<feature type="sequence variant" id="VAR_067504" description="In PHA2D; impaired interaction with CUL3; de novo mutation; dbSNP:rs199469626." evidence="4 6 10">
    <original>C</original>
    <variation>F</variation>
    <location>
        <position position="164"/>
    </location>
</feature>
<feature type="sequence variant" id="VAR_067505" description="In PHA2D." evidence="5">
    <original>R</original>
    <variation>G</variation>
    <location>
        <position position="228"/>
    </location>
</feature>
<feature type="sequence variant" id="VAR_067506" description="In PHA2D; impaired interaction with WNK1; dbSNP:rs199469627." evidence="4 6 10 17">
    <original>Q</original>
    <variation>R</variation>
    <location>
        <position position="309"/>
    </location>
</feature>
<feature type="sequence variant" id="VAR_067507" description="In PHA2D; dbSNP:rs199469639." evidence="4">
    <original>F</original>
    <variation>C</variation>
    <location>
        <position position="322"/>
    </location>
</feature>
<feature type="sequence variant" id="VAR_067508" description="In PHA2D; dbSNP:rs199469640." evidence="4">
    <original>R</original>
    <variation>I</variation>
    <location>
        <position position="336"/>
    </location>
</feature>
<feature type="sequence variant" id="VAR_067509" description="In PHA2D; does not affect interaction with WNK1 or CUL3; dbSNP:rs199469628." evidence="4 6">
    <original>A</original>
    <variation>V</variation>
    <location>
        <position position="340"/>
    </location>
</feature>
<feature type="sequence variant" id="VAR_067510" description="In PHA2D." evidence="5">
    <original>V</original>
    <variation>M</variation>
    <location>
        <position position="361"/>
    </location>
</feature>
<feature type="sequence variant" id="VAR_067511" description="In PHA2D; dbSNP:rs200892557." evidence="5">
    <original>R</original>
    <variation>W</variation>
    <location>
        <position position="362"/>
    </location>
</feature>
<feature type="sequence variant" id="VAR_067512" description="In PHA2D; impaired interaction with WNK1; dbSNP:rs199469629." evidence="4 6">
    <original>R</original>
    <variation>Q</variation>
    <location>
        <position position="384"/>
    </location>
</feature>
<feature type="sequence variant" id="VAR_067513" description="In PHA2D; dbSNP:rs951676369." evidence="5">
    <original>R</original>
    <variation>W</variation>
    <location>
        <position position="384"/>
    </location>
</feature>
<feature type="sequence variant" id="VAR_067514" description="In PHA2D; abolished interaction with WNK1; dbSNP:rs199469630." evidence="4 6 10 15">
    <original>L</original>
    <variation>P</variation>
    <location>
        <position position="387"/>
    </location>
</feature>
<feature type="sequence variant" id="VAR_067515" description="In PHA2D; dbSNP:rs387907155." evidence="5">
    <original>A</original>
    <variation>V</variation>
    <location>
        <position position="398"/>
    </location>
</feature>
<feature type="sequence variant" id="VAR_067516" description="In PHA2D; impaired interaction with WNK1; dbSNP:rs199469641." evidence="4 5 6">
    <original>S</original>
    <variation>L</variation>
    <location>
        <position position="410"/>
    </location>
</feature>
<feature type="sequence variant" id="VAR_067517" description="In PHA2D; dbSNP:rs387907156." evidence="5">
    <original>P</original>
    <variation>L</variation>
    <location>
        <position position="426"/>
    </location>
</feature>
<feature type="sequence variant" id="VAR_067518" description="In PHA2D; dbSNP:rs199469642." evidence="4">
    <original>M</original>
    <variation>T</variation>
    <location>
        <position position="427"/>
    </location>
</feature>
<feature type="sequence variant" id="VAR_067519" description="In PHA2D; dbSNP:rs199469643." evidence="4">
    <original>R</original>
    <variation>Q</variation>
    <location>
        <position position="431"/>
    </location>
</feature>
<feature type="sequence variant" id="VAR_088177" description="In PHA2D; increased level of WNK4, leading to increased NaCl reabsorption; dbSNP:rs769995865." evidence="20">
    <original>R</original>
    <variation>W</variation>
    <location>
        <position position="431"/>
    </location>
</feature>
<feature type="sequence variant" id="VAR_067520" description="In PHA2D; impaired interaction with WNK1; dbSNP:rs199469631." evidence="4 5 6">
    <original>S</original>
    <variation>N</variation>
    <location>
        <position position="432"/>
    </location>
</feature>
<feature type="sequence variant" id="VAR_067521" description="In PHA2D; decreased interaction with WNK4." evidence="5 12">
    <original>S</original>
    <variation>G</variation>
    <location>
        <position position="433"/>
    </location>
</feature>
<feature type="sequence variant" id="VAR_067522" description="In PHA2D; dbSNP:rs199469632." evidence="4 6">
    <original>S</original>
    <variation>N</variation>
    <location>
        <position position="433"/>
    </location>
</feature>
<feature type="sequence variant" id="VAR_067523" description="Found in a patient with hypertension; uncertain significance; dbSNP:rs907779058." evidence="4">
    <original>V</original>
    <variation>I</variation>
    <location>
        <position position="438"/>
    </location>
</feature>
<feature type="sequence variant" id="VAR_088178" description="In PHA2D." evidence="4">
    <location>
        <begin position="470"/>
        <end position="587"/>
    </location>
</feature>
<feature type="sequence variant" id="VAR_067524" description="In PHA2D; does not affect interaction with WNK1 or CUL3; dbSNP:rs199469633." evidence="4 6">
    <original>A</original>
    <variation>T</variation>
    <location>
        <position position="494"/>
    </location>
</feature>
<feature type="sequence variant" id="VAR_079630" description="In PHA2D." evidence="13">
    <original>H</original>
    <variation>Y</variation>
    <location>
        <position position="498"/>
    </location>
</feature>
<feature type="sequence variant" id="VAR_067525" description="In PHA2D; dbSNP:rs746774345." evidence="5">
    <original>G</original>
    <variation>V</variation>
    <location>
        <position position="500"/>
    </location>
</feature>
<feature type="sequence variant" id="VAR_067526" description="In PHA2D; dbSNP:rs199469634." evidence="4">
    <original>P</original>
    <variation>T</variation>
    <location>
        <position position="501"/>
    </location>
</feature>
<feature type="sequence variant" id="VAR_067527" description="In PHA2D; impaired interaction with WNK1; dbSNP:rs199469635." evidence="4 5 6 10">
    <original>R</original>
    <variation>C</variation>
    <location>
        <position position="528"/>
    </location>
</feature>
<feature type="sequence variant" id="VAR_067528" description="In PHA2D; dominant negative effect due to homodimer formation; impaired interaction with WNK1 and WNK4 and impaired ubiquitination of WNK4; dbSNP:rs199469636." evidence="4 5 6 7 9 16">
    <original>R</original>
    <variation>H</variation>
    <location>
        <position position="528"/>
    </location>
</feature>
<feature type="sequence variant" id="VAR_067529" description="In PHA2D; impaired interaction with WNK1; dbSNP:rs562736621." evidence="5 6">
    <original>N</original>
    <variation>K</variation>
    <location>
        <position position="529"/>
    </location>
</feature>
<feature type="sequence variant" id="VAR_079631" description="In PHA2D; dbSNP:rs1367184898." evidence="17">
    <original>S</original>
    <variation>L</variation>
    <location>
        <position position="553"/>
    </location>
</feature>
<feature type="sequence variant" id="VAR_067530" description="In PHA2D; dbSNP:rs199469645." evidence="4">
    <original>Y</original>
    <variation>C</variation>
    <location>
        <position position="557"/>
    </location>
</feature>
<feature type="sequence variant" id="VAR_067531" description="In PHA2D; dbSNP:rs199469646." evidence="4">
    <original>R</original>
    <variation>W</variation>
    <location>
        <position position="575"/>
    </location>
</feature>
<feature type="mutagenesis site" description="Abolished phosphorylation by PKC, promoting ubiquitination and degradation of WNK4." evidence="11 18">
    <original>S</original>
    <variation>A</variation>
    <variation>N</variation>
    <location>
        <position position="433"/>
    </location>
</feature>
<feature type="mutagenesis site" description="Mimics phosphorylation, preventing binding and degradation of WNK4." evidence="11 12">
    <original>S</original>
    <variation>E</variation>
    <variation>D</variation>
    <location>
        <position position="433"/>
    </location>
</feature>
<feature type="sequence conflict" description="In Ref. 1; AAF20938." evidence="24" ref="1">
    <original>T</original>
    <variation>N</variation>
    <location>
        <position position="227"/>
    </location>
</feature>
<feature type="strand" evidence="30">
    <location>
        <begin position="301"/>
        <end position="306"/>
    </location>
</feature>
<feature type="strand" evidence="30">
    <location>
        <begin position="309"/>
        <end position="314"/>
    </location>
</feature>
<feature type="strand" evidence="30">
    <location>
        <begin position="317"/>
        <end position="321"/>
    </location>
</feature>
<feature type="turn" evidence="30">
    <location>
        <begin position="322"/>
        <end position="325"/>
    </location>
</feature>
<feature type="strand" evidence="30">
    <location>
        <begin position="326"/>
        <end position="331"/>
    </location>
</feature>
<feature type="strand" evidence="30">
    <location>
        <begin position="337"/>
        <end position="339"/>
    </location>
</feature>
<feature type="strand" evidence="30">
    <location>
        <begin position="341"/>
        <end position="345"/>
    </location>
</feature>
<feature type="strand" evidence="30">
    <location>
        <begin position="348"/>
        <end position="355"/>
    </location>
</feature>
<feature type="strand" evidence="30">
    <location>
        <begin position="357"/>
        <end position="368"/>
    </location>
</feature>
<feature type="turn" evidence="30">
    <location>
        <begin position="369"/>
        <end position="372"/>
    </location>
</feature>
<feature type="strand" evidence="30">
    <location>
        <begin position="373"/>
        <end position="376"/>
    </location>
</feature>
<feature type="strand" evidence="30">
    <location>
        <begin position="388"/>
        <end position="392"/>
    </location>
</feature>
<feature type="strand" evidence="30">
    <location>
        <begin position="395"/>
        <end position="399"/>
    </location>
</feature>
<feature type="strand" evidence="30">
    <location>
        <begin position="404"/>
        <end position="407"/>
    </location>
</feature>
<feature type="strand" evidence="30">
    <location>
        <begin position="411"/>
        <end position="415"/>
    </location>
</feature>
<feature type="turn" evidence="30">
    <location>
        <begin position="416"/>
        <end position="419"/>
    </location>
</feature>
<feature type="strand" evidence="30">
    <location>
        <begin position="420"/>
        <end position="424"/>
    </location>
</feature>
<feature type="strand" evidence="30">
    <location>
        <begin position="435"/>
        <end position="439"/>
    </location>
</feature>
<feature type="strand" evidence="30">
    <location>
        <begin position="442"/>
        <end position="446"/>
    </location>
</feature>
<feature type="turn" evidence="30">
    <location>
        <begin position="451"/>
        <end position="454"/>
    </location>
</feature>
<feature type="strand" evidence="30">
    <location>
        <begin position="460"/>
        <end position="464"/>
    </location>
</feature>
<feature type="turn" evidence="30">
    <location>
        <begin position="465"/>
        <end position="468"/>
    </location>
</feature>
<feature type="strand" evidence="30">
    <location>
        <begin position="469"/>
        <end position="472"/>
    </location>
</feature>
<feature type="strand" evidence="30">
    <location>
        <begin position="484"/>
        <end position="488"/>
    </location>
</feature>
<feature type="strand" evidence="30">
    <location>
        <begin position="491"/>
        <end position="495"/>
    </location>
</feature>
<feature type="strand" evidence="30">
    <location>
        <begin position="507"/>
        <end position="510"/>
    </location>
</feature>
<feature type="turn" evidence="30">
    <location>
        <begin position="512"/>
        <end position="514"/>
    </location>
</feature>
<feature type="strand" evidence="30">
    <location>
        <begin position="517"/>
        <end position="520"/>
    </location>
</feature>
<feature type="strand" evidence="30">
    <location>
        <begin position="531"/>
        <end position="535"/>
    </location>
</feature>
<feature type="strand" evidence="30">
    <location>
        <begin position="538"/>
        <end position="542"/>
    </location>
</feature>
<feature type="strand" evidence="30">
    <location>
        <begin position="545"/>
        <end position="550"/>
    </location>
</feature>
<feature type="strand" evidence="30">
    <location>
        <begin position="554"/>
        <end position="558"/>
    </location>
</feature>
<feature type="turn" evidence="30">
    <location>
        <begin position="559"/>
        <end position="562"/>
    </location>
</feature>
<feature type="strand" evidence="30">
    <location>
        <begin position="563"/>
        <end position="566"/>
    </location>
</feature>
<feature type="strand" evidence="31">
    <location>
        <begin position="575"/>
        <end position="577"/>
    </location>
</feature>
<feature type="strand" evidence="30">
    <location>
        <begin position="579"/>
        <end position="584"/>
    </location>
</feature>
<comment type="function">
    <text evidence="1 3 5 6 7 9 10 11 20">Substrate-specific adapter of a BCR (BTB-CUL3-RBX1) E3 ubiquitin ligase complex that acts as a regulator of ion transport in the distal nephron (PubMed:14528312, PubMed:22406640, PubMed:23387299, PubMed:23453970, PubMed:23576762, PubMed:23665031, PubMed:25313067, PubMed:35093948). The BCR(KLHL3) complex acts by mediating ubiquitination and degradation of WNK1 and WNK4, two activators of Na-Cl cotransporter SLC12A3/NCC in distal convoluted tubule cells of kidney, thereby regulating NaCl reabsorption (PubMed:23387299, PubMed:23453970, PubMed:23576762, PubMed:23665031, PubMed:25313067, PubMed:35093948). The BCR(KLHL3) complex also mediates ubiquitination and degradation of WNK3 (PubMed:35179207). The BCR(KLHL3) complex also mediates ubiquitination of CLDN8, a tight-junction protein required for paracellular chloride transport in the kidney, leading to its degradation (By similarity).</text>
</comment>
<comment type="pathway">
    <text evidence="3 21">Protein modification; protein ubiquitination.</text>
</comment>
<comment type="subunit">
    <text evidence="1 3 6 7 8 9 16">Homodimer (PubMed:28052936). Component of the BCR(KLHL3) E3 ubiquitin ligase complex, at least composed of CUL3 and KLHL3 and RBX1 (PubMed:14528312, PubMed:23387299, PubMed:23453970, PubMed:23573258, PubMed:23576762). Interacts with CLDN8 (By similarity).</text>
</comment>
<comment type="interaction">
    <interactant intactId="EBI-8524663">
        <id>Q9UH77</id>
    </interactant>
    <interactant intactId="EBI-718729">
        <id>P55212</id>
        <label>CASP6</label>
    </interactant>
    <organismsDiffer>false</organismsDiffer>
    <experiments>3</experiments>
</comment>
<comment type="interaction">
    <interactant intactId="EBI-8524663">
        <id>Q9UH77</id>
    </interactant>
    <interactant intactId="EBI-456129">
        <id>Q13618</id>
        <label>CUL3</label>
    </interactant>
    <organismsDiffer>false</organismsDiffer>
    <experiments>9</experiments>
</comment>
<comment type="interaction">
    <interactant intactId="EBI-8524663">
        <id>Q9UH77</id>
    </interactant>
    <interactant intactId="EBI-12593112">
        <id>O75190-2</id>
        <label>DNAJB6</label>
    </interactant>
    <organismsDiffer>false</organismsDiffer>
    <experiments>3</experiments>
</comment>
<comment type="interaction">
    <interactant intactId="EBI-8524663">
        <id>Q9UH77</id>
    </interactant>
    <interactant intactId="EBI-348399">
        <id>P22607</id>
        <label>FGFR3</label>
    </interactant>
    <organismsDiffer>false</organismsDiffer>
    <experiments>3</experiments>
</comment>
<comment type="interaction">
    <interactant intactId="EBI-8524663">
        <id>Q9UH77</id>
    </interactant>
    <interactant intactId="EBI-351506">
        <id>P06396</id>
        <label>GSN</label>
    </interactant>
    <organismsDiffer>false</organismsDiffer>
    <experiments>3</experiments>
</comment>
<comment type="interaction">
    <interactant intactId="EBI-8524663">
        <id>Q9UH77</id>
    </interactant>
    <interactant intactId="EBI-350145">
        <id>P01112</id>
        <label>HRAS</label>
    </interactant>
    <organismsDiffer>false</organismsDiffer>
    <experiments>3</experiments>
</comment>
<comment type="interaction">
    <interactant intactId="EBI-8524663">
        <id>Q9UH77</id>
    </interactant>
    <interactant intactId="EBI-751001">
        <id>Q14145</id>
        <label>KEAP1</label>
    </interactant>
    <organismsDiffer>false</organismsDiffer>
    <experiments>5</experiments>
</comment>
<comment type="interaction">
    <interactant intactId="EBI-8524663">
        <id>Q9UH77</id>
    </interactant>
    <interactant intactId="EBI-948266">
        <id>O14901</id>
        <label>KLF11</label>
    </interactant>
    <organismsDiffer>false</organismsDiffer>
    <experiments>3</experiments>
</comment>
<comment type="interaction">
    <interactant intactId="EBI-8524663">
        <id>Q9UH77</id>
    </interactant>
    <interactant intactId="EBI-740929">
        <id>Q53G59</id>
        <label>KLHL12</label>
    </interactant>
    <organismsDiffer>false</organismsDiffer>
    <experiments>4</experiments>
</comment>
<comment type="interaction">
    <interactant intactId="EBI-8524663">
        <id>Q9UH77</id>
    </interactant>
    <interactant intactId="EBI-746999">
        <id>O95198</id>
        <label>KLHL2</label>
    </interactant>
    <organismsDiffer>false</organismsDiffer>
    <experiments>6</experiments>
</comment>
<comment type="interaction">
    <interactant intactId="EBI-8524663">
        <id>Q9UH77</id>
    </interactant>
    <interactant intactId="EBI-21591415">
        <id>P13473-2</id>
        <label>LAMP2</label>
    </interactant>
    <organismsDiffer>false</organismsDiffer>
    <experiments>3</experiments>
</comment>
<comment type="interaction">
    <interactant intactId="EBI-8524663">
        <id>Q9UH77</id>
    </interactant>
    <interactant intactId="EBI-12076664">
        <id>O14787-2</id>
        <label>TNPO2</label>
    </interactant>
    <organismsDiffer>false</organismsDiffer>
    <experiments>3</experiments>
</comment>
<comment type="subcellular location">
    <subcellularLocation>
        <location evidence="5">Cytoplasm</location>
        <location evidence="5">Cytosol</location>
    </subcellularLocation>
    <subcellularLocation>
        <location evidence="5">Cytoplasm</location>
        <location evidence="5">Cytoskeleton</location>
    </subcellularLocation>
</comment>
<comment type="alternative products">
    <event type="alternative splicing"/>
    <isoform>
        <id>Q9UH77-1</id>
        <name>A</name>
        <name evidence="23">KLHL3A</name>
        <sequence type="displayed"/>
    </isoform>
    <isoform>
        <id>Q9UH77-2</id>
        <name>B</name>
        <name evidence="23">KLHL3B</name>
        <sequence type="described" ref="VSP_002816"/>
    </isoform>
    <isoform>
        <id>Q9UH77-3</id>
        <name>C</name>
        <name evidence="23">KLHL3C</name>
        <sequence type="described" ref="VSP_002817"/>
    </isoform>
</comment>
<comment type="tissue specificity">
    <text evidence="5">Widely expressed.</text>
</comment>
<comment type="PTM">
    <text evidence="11 12 14 18">Phosphorylation at Ser-433 by PKA or PKC decreases the interaction with WNK1 and WNK4, leading to inhibit their degradation by the BCR(KLHL3) complex (PubMed:25313067, PubMed:26435498, PubMed:27727489, PubMed:30718414). Phosphorylated at Ser-433 by PKC in response to angiotensin II signaling, decreasing ability to promote degradation of WNK1 and WNK4, leading to activation of Na-Cl cotransporter SLC12A3/NCC (PubMed:25313067). Phosphorylation at Ser-433 is increased by insulin (PubMed:26435498). Dephosphorylated at Ser-433 by calcineurin PPP3CA, promoting degradation of WNK1 and WNK4 (PubMed:30718414).</text>
</comment>
<comment type="disease" evidence="4 5 6 7 9 10 12 13 15 16 17 19 20">
    <disease id="DI-03366">
        <name>Pseudohypoaldosteronism 2D</name>
        <acronym>PHA2D</acronym>
        <description>A disorder characterized by severe hypertension, hyperkalemia, hyperchloremia, hyperchloremic metabolic acidosis, and correction of physiologic abnormalities by thiazide diuretics. PHA2D inheritance is autosomal dominant or recessive.</description>
        <dbReference type="MIM" id="614495"/>
    </disease>
    <text>The disease is caused by variants affecting the gene represented in this entry.</text>
</comment>
<comment type="similarity">
    <text evidence="24">Belongs to the KLHL3 family.</text>
</comment>
<comment type="caution">
    <text evidence="25 26">The BCR(KLHL3) complex was initially thought to act by mediating ubiquitination of SLC12A3/NCC (PubMed:22406640). However, it was later shown that effects on SLC12A3/NCC are indirect and caused by impaired ubiquitination of WNK4 (PubMed:23387299).</text>
</comment>
<comment type="sequence caution" evidence="24">
    <conflict type="erroneous gene model prediction">
        <sequence resource="EMBL-CDS" id="AAB97127"/>
    </conflict>
</comment>
<comment type="sequence caution" evidence="24">
    <conflict type="erroneous initiation">
        <sequence resource="EMBL-CDS" id="BAA86443"/>
    </conflict>
    <text>Extended N-terminus.</text>
</comment>
<organism>
    <name type="scientific">Homo sapiens</name>
    <name type="common">Human</name>
    <dbReference type="NCBI Taxonomy" id="9606"/>
    <lineage>
        <taxon>Eukaryota</taxon>
        <taxon>Metazoa</taxon>
        <taxon>Chordata</taxon>
        <taxon>Craniata</taxon>
        <taxon>Vertebrata</taxon>
        <taxon>Euteleostomi</taxon>
        <taxon>Mammalia</taxon>
        <taxon>Eutheria</taxon>
        <taxon>Euarchontoglires</taxon>
        <taxon>Primates</taxon>
        <taxon>Haplorrhini</taxon>
        <taxon>Catarrhini</taxon>
        <taxon>Hominidae</taxon>
        <taxon>Homo</taxon>
    </lineage>
</organism>
<name>KLHL3_HUMAN</name>
<sequence length="587" mass="64970">MEGESVKLSSQTLIQAGDDEKNQRTITVNPAHMGKAFKVMNELRSKQLLCDVMIVAEDVEIEAHRVVLAACSPYFCAMFTGDMSESKAKKIEIKDVDGQTLSKLIDYIYTAEIEVTEENVQVLLPAASLLQLMDVRQNCCDFLQSQLHPTNCLGIRAFADVHTCTDLLQQANAYAEQHFPEVMLGEEFLSLSLDQVCSLISSDKLTVSSEEKVFEAVISWINYEKETRLEHMAKLMEHVRLPLLPRDYLVQTVEEEALIKNNNTCKDFLIEAMKYHLLPLDQRLLIKNPRTKPRTPVSLPKVMIVVGGQAPKAIRSVECYDFEEDRWDQIAELPSRRCRAGVVFMAGHVYAVGGFNGSLRVRTVDVYDGVKDQWTSIASMQERRSTLGAAVLNDLLYAVGGFDGSTGLASVEAYSYKTNEWFFVAPMNTRRSSVGVGVVEGKLYAVGGYDGASRQCLSTVEQYNPATNEWIYVADMSTRRSGAGVGVLSGQLYATGGHDGPLVRKSVEVYDPGTNTWKQVADMNMCRRNAGVCAVNGLLYVVGGDDGSCNLASVEYYNPVTDKWTLLPTNMSTGRSYAGVAVIHKSL</sequence>
<protein>
    <recommendedName>
        <fullName evidence="24">Kelch-like protein 3</fullName>
    </recommendedName>
</protein>
<accession>Q9UH77</accession>
<accession>B2RBK7</accession>
<accession>Q9UH75</accession>
<accession>Q9UH76</accession>
<accession>Q9ULU0</accession>
<accession>Q9Y6V6</accession>
<proteinExistence type="evidence at protein level"/>
<reference key="1">
    <citation type="journal article" date="2000" name="Genomics">
        <title>Molecular characterization of KLHL3, a human homologue of the Drosophila kelch gene.</title>
        <authorList>
            <person name="Lai F."/>
            <person name="Orelli B.J."/>
            <person name="Till B.G."/>
            <person name="Godley L.A."/>
            <person name="Fernald A.A."/>
            <person name="Pamintuan L."/>
            <person name="Le Beau M.M."/>
        </authorList>
    </citation>
    <scope>NUCLEOTIDE SEQUENCE [MRNA] (ISOFORMS A; B AND C)</scope>
    <scope>ALTERNATIVE SPLICING</scope>
    <source>
        <tissue>Bone marrow</tissue>
    </source>
</reference>
<reference key="2">
    <citation type="journal article" date="1999" name="DNA Res.">
        <title>Characterization of cDNA clones selected by the GeneMark analysis from size-fractionated cDNA libraries from human brain.</title>
        <authorList>
            <person name="Hirosawa M."/>
            <person name="Nagase T."/>
            <person name="Ishikawa K."/>
            <person name="Kikuno R."/>
            <person name="Nomura N."/>
            <person name="Ohara O."/>
        </authorList>
    </citation>
    <scope>NUCLEOTIDE SEQUENCE [LARGE SCALE MRNA] (ISOFORM A)</scope>
    <source>
        <tissue>Brain</tissue>
    </source>
</reference>
<reference key="3">
    <citation type="journal article" date="2004" name="Nat. Genet.">
        <title>Complete sequencing and characterization of 21,243 full-length human cDNAs.</title>
        <authorList>
            <person name="Ota T."/>
            <person name="Suzuki Y."/>
            <person name="Nishikawa T."/>
            <person name="Otsuki T."/>
            <person name="Sugiyama T."/>
            <person name="Irie R."/>
            <person name="Wakamatsu A."/>
            <person name="Hayashi K."/>
            <person name="Sato H."/>
            <person name="Nagai K."/>
            <person name="Kimura K."/>
            <person name="Makita H."/>
            <person name="Sekine M."/>
            <person name="Obayashi M."/>
            <person name="Nishi T."/>
            <person name="Shibahara T."/>
            <person name="Tanaka T."/>
            <person name="Ishii S."/>
            <person name="Yamamoto J."/>
            <person name="Saito K."/>
            <person name="Kawai Y."/>
            <person name="Isono Y."/>
            <person name="Nakamura Y."/>
            <person name="Nagahari K."/>
            <person name="Murakami K."/>
            <person name="Yasuda T."/>
            <person name="Iwayanagi T."/>
            <person name="Wagatsuma M."/>
            <person name="Shiratori A."/>
            <person name="Sudo H."/>
            <person name="Hosoiri T."/>
            <person name="Kaku Y."/>
            <person name="Kodaira H."/>
            <person name="Kondo H."/>
            <person name="Sugawara M."/>
            <person name="Takahashi M."/>
            <person name="Kanda K."/>
            <person name="Yokoi T."/>
            <person name="Furuya T."/>
            <person name="Kikkawa E."/>
            <person name="Omura Y."/>
            <person name="Abe K."/>
            <person name="Kamihara K."/>
            <person name="Katsuta N."/>
            <person name="Sato K."/>
            <person name="Tanikawa M."/>
            <person name="Yamazaki M."/>
            <person name="Ninomiya K."/>
            <person name="Ishibashi T."/>
            <person name="Yamashita H."/>
            <person name="Murakawa K."/>
            <person name="Fujimori K."/>
            <person name="Tanai H."/>
            <person name="Kimata M."/>
            <person name="Watanabe M."/>
            <person name="Hiraoka S."/>
            <person name="Chiba Y."/>
            <person name="Ishida S."/>
            <person name="Ono Y."/>
            <person name="Takiguchi S."/>
            <person name="Watanabe S."/>
            <person name="Yosida M."/>
            <person name="Hotuta T."/>
            <person name="Kusano J."/>
            <person name="Kanehori K."/>
            <person name="Takahashi-Fujii A."/>
            <person name="Hara H."/>
            <person name="Tanase T.-O."/>
            <person name="Nomura Y."/>
            <person name="Togiya S."/>
            <person name="Komai F."/>
            <person name="Hara R."/>
            <person name="Takeuchi K."/>
            <person name="Arita M."/>
            <person name="Imose N."/>
            <person name="Musashino K."/>
            <person name="Yuuki H."/>
            <person name="Oshima A."/>
            <person name="Sasaki N."/>
            <person name="Aotsuka S."/>
            <person name="Yoshikawa Y."/>
            <person name="Matsunawa H."/>
            <person name="Ichihara T."/>
            <person name="Shiohata N."/>
            <person name="Sano S."/>
            <person name="Moriya S."/>
            <person name="Momiyama H."/>
            <person name="Satoh N."/>
            <person name="Takami S."/>
            <person name="Terashima Y."/>
            <person name="Suzuki O."/>
            <person name="Nakagawa S."/>
            <person name="Senoh A."/>
            <person name="Mizoguchi H."/>
            <person name="Goto Y."/>
            <person name="Shimizu F."/>
            <person name="Wakebe H."/>
            <person name="Hishigaki H."/>
            <person name="Watanabe T."/>
            <person name="Sugiyama A."/>
            <person name="Takemoto M."/>
            <person name="Kawakami B."/>
            <person name="Yamazaki M."/>
            <person name="Watanabe K."/>
            <person name="Kumagai A."/>
            <person name="Itakura S."/>
            <person name="Fukuzumi Y."/>
            <person name="Fujimori Y."/>
            <person name="Komiyama M."/>
            <person name="Tashiro H."/>
            <person name="Tanigami A."/>
            <person name="Fujiwara T."/>
            <person name="Ono T."/>
            <person name="Yamada K."/>
            <person name="Fujii Y."/>
            <person name="Ozaki K."/>
            <person name="Hirao M."/>
            <person name="Ohmori Y."/>
            <person name="Kawabata A."/>
            <person name="Hikiji T."/>
            <person name="Kobatake N."/>
            <person name="Inagaki H."/>
            <person name="Ikema Y."/>
            <person name="Okamoto S."/>
            <person name="Okitani R."/>
            <person name="Kawakami T."/>
            <person name="Noguchi S."/>
            <person name="Itoh T."/>
            <person name="Shigeta K."/>
            <person name="Senba T."/>
            <person name="Matsumura K."/>
            <person name="Nakajima Y."/>
            <person name="Mizuno T."/>
            <person name="Morinaga M."/>
            <person name="Sasaki M."/>
            <person name="Togashi T."/>
            <person name="Oyama M."/>
            <person name="Hata H."/>
            <person name="Watanabe M."/>
            <person name="Komatsu T."/>
            <person name="Mizushima-Sugano J."/>
            <person name="Satoh T."/>
            <person name="Shirai Y."/>
            <person name="Takahashi Y."/>
            <person name="Nakagawa K."/>
            <person name="Okumura K."/>
            <person name="Nagase T."/>
            <person name="Nomura N."/>
            <person name="Kikuchi H."/>
            <person name="Masuho Y."/>
            <person name="Yamashita R."/>
            <person name="Nakai K."/>
            <person name="Yada T."/>
            <person name="Nakamura Y."/>
            <person name="Ohara O."/>
            <person name="Isogai T."/>
            <person name="Sugano S."/>
        </authorList>
    </citation>
    <scope>NUCLEOTIDE SEQUENCE [LARGE SCALE MRNA] (ISOFORM A)</scope>
    <source>
        <tissue>Kidney</tissue>
    </source>
</reference>
<reference key="4">
    <citation type="journal article" date="2004" name="Nature">
        <title>The DNA sequence and comparative analysis of human chromosome 5.</title>
        <authorList>
            <person name="Schmutz J."/>
            <person name="Martin J."/>
            <person name="Terry A."/>
            <person name="Couronne O."/>
            <person name="Grimwood J."/>
            <person name="Lowry S."/>
            <person name="Gordon L.A."/>
            <person name="Scott D."/>
            <person name="Xie G."/>
            <person name="Huang W."/>
            <person name="Hellsten U."/>
            <person name="Tran-Gyamfi M."/>
            <person name="She X."/>
            <person name="Prabhakar S."/>
            <person name="Aerts A."/>
            <person name="Altherr M."/>
            <person name="Bajorek E."/>
            <person name="Black S."/>
            <person name="Branscomb E."/>
            <person name="Caoile C."/>
            <person name="Challacombe J.F."/>
            <person name="Chan Y.M."/>
            <person name="Denys M."/>
            <person name="Detter J.C."/>
            <person name="Escobar J."/>
            <person name="Flowers D."/>
            <person name="Fotopulos D."/>
            <person name="Glavina T."/>
            <person name="Gomez M."/>
            <person name="Gonzales E."/>
            <person name="Goodstein D."/>
            <person name="Grigoriev I."/>
            <person name="Groza M."/>
            <person name="Hammon N."/>
            <person name="Hawkins T."/>
            <person name="Haydu L."/>
            <person name="Israni S."/>
            <person name="Jett J."/>
            <person name="Kadner K."/>
            <person name="Kimball H."/>
            <person name="Kobayashi A."/>
            <person name="Lopez F."/>
            <person name="Lou Y."/>
            <person name="Martinez D."/>
            <person name="Medina C."/>
            <person name="Morgan J."/>
            <person name="Nandkeshwar R."/>
            <person name="Noonan J.P."/>
            <person name="Pitluck S."/>
            <person name="Pollard M."/>
            <person name="Predki P."/>
            <person name="Priest J."/>
            <person name="Ramirez L."/>
            <person name="Retterer J."/>
            <person name="Rodriguez A."/>
            <person name="Rogers S."/>
            <person name="Salamov A."/>
            <person name="Salazar A."/>
            <person name="Thayer N."/>
            <person name="Tice H."/>
            <person name="Tsai M."/>
            <person name="Ustaszewska A."/>
            <person name="Vo N."/>
            <person name="Wheeler J."/>
            <person name="Wu K."/>
            <person name="Yang J."/>
            <person name="Dickson M."/>
            <person name="Cheng J.-F."/>
            <person name="Eichler E.E."/>
            <person name="Olsen A."/>
            <person name="Pennacchio L.A."/>
            <person name="Rokhsar D.S."/>
            <person name="Richardson P."/>
            <person name="Lucas S.M."/>
            <person name="Myers R.M."/>
            <person name="Rubin E.M."/>
        </authorList>
    </citation>
    <scope>NUCLEOTIDE SEQUENCE [LARGE SCALE GENOMIC DNA]</scope>
</reference>
<reference key="5">
    <citation type="submission" date="2005-09" db="EMBL/GenBank/DDBJ databases">
        <authorList>
            <person name="Mural R.J."/>
            <person name="Istrail S."/>
            <person name="Sutton G.G."/>
            <person name="Florea L."/>
            <person name="Halpern A.L."/>
            <person name="Mobarry C.M."/>
            <person name="Lippert R."/>
            <person name="Walenz B."/>
            <person name="Shatkay H."/>
            <person name="Dew I."/>
            <person name="Miller J.R."/>
            <person name="Flanigan M.J."/>
            <person name="Edwards N.J."/>
            <person name="Bolanos R."/>
            <person name="Fasulo D."/>
            <person name="Halldorsson B.V."/>
            <person name="Hannenhalli S."/>
            <person name="Turner R."/>
            <person name="Yooseph S."/>
            <person name="Lu F."/>
            <person name="Nusskern D.R."/>
            <person name="Shue B.C."/>
            <person name="Zheng X.H."/>
            <person name="Zhong F."/>
            <person name="Delcher A.L."/>
            <person name="Huson D.H."/>
            <person name="Kravitz S.A."/>
            <person name="Mouchard L."/>
            <person name="Reinert K."/>
            <person name="Remington K.A."/>
            <person name="Clark A.G."/>
            <person name="Waterman M.S."/>
            <person name="Eichler E.E."/>
            <person name="Adams M.D."/>
            <person name="Hunkapiller M.W."/>
            <person name="Myers E.W."/>
            <person name="Venter J.C."/>
        </authorList>
    </citation>
    <scope>NUCLEOTIDE SEQUENCE [LARGE SCALE GENOMIC DNA]</scope>
</reference>
<reference key="6">
    <citation type="journal article" date="2003" name="Nat. Cell Biol.">
        <title>Targeting of protein ubiquitination by BTB-Cullin 3-Roc1 ubiquitin ligases.</title>
        <authorList>
            <person name="Furukawa M."/>
            <person name="He Y.J."/>
            <person name="Borchers C."/>
            <person name="Xiong Y."/>
        </authorList>
    </citation>
    <scope>FUNCTION AS AN E3 UBIQUITIN-PROTEIN LIGASE</scope>
    <scope>INTERACTION WITH CUL3</scope>
</reference>
<reference key="7">
    <citation type="journal article" date="2013" name="Biochem. J.">
        <title>The CUL3-KLHL3 E3 ligase complex mutated in Gordon's hypertension syndrome interacts with and ubiquitylates WNK isoforms: disease-causing mutations in KLHL3 and WNK4 disrupt interaction.</title>
        <authorList>
            <person name="Ohta A."/>
            <person name="Schumacher F.R."/>
            <person name="Mehellou Y."/>
            <person name="Johnson C."/>
            <person name="Knebel A."/>
            <person name="Macartney T.J."/>
            <person name="Wood N.T."/>
            <person name="Alessi D.R."/>
            <person name="Kurz T."/>
        </authorList>
    </citation>
    <scope>FUNCTION</scope>
    <scope>INTERACTION WITH CUL3</scope>
    <scope>CHARACTERIZATION OF VARIANTS PHA2D GLU-77; VAL-78; ALA-85; PHE-164; ARG-309; VAL-340; GLN-384; PRO-387; LEU-410; ASN-432; ASN-433; THR-494; HIS-528; CYS-528 AND LYS-529</scope>
</reference>
<reference key="8">
    <citation type="journal article" date="2013" name="Cell Rep.">
        <title>Impaired KLHL3-mediated ubiquitination of WNK4 causes human hypertension.</title>
        <authorList>
            <person name="Wakabayashi M."/>
            <person name="Mori T."/>
            <person name="Isobe K."/>
            <person name="Sohara E."/>
            <person name="Susa K."/>
            <person name="Araki Y."/>
            <person name="Chiga M."/>
            <person name="Kikuchi E."/>
            <person name="Nomura N."/>
            <person name="Mori Y."/>
            <person name="Matsuo H."/>
            <person name="Murata T."/>
            <person name="Nomura S."/>
            <person name="Asano T."/>
            <person name="Kawaguchi H."/>
            <person name="Nonoyama S."/>
            <person name="Rai T."/>
            <person name="Sasaki S."/>
            <person name="Uchida S."/>
        </authorList>
    </citation>
    <scope>FUNCTION</scope>
    <scope>IDENTIFICATION IN A BCR (BTB-CUL3-RBX1) E3 UBIQUITIN LIGASE COMPLEX</scope>
    <scope>CHARACTERIZATION OF VARIANT PHA2D HIS-528</scope>
</reference>
<reference key="9">
    <citation type="journal article" date="2013" name="FEBS Lett.">
        <title>Disease-causing mutations in KLHL3 impair its effect on WNK4 degradation.</title>
        <authorList>
            <person name="Wu G."/>
            <person name="Peng J.B."/>
        </authorList>
    </citation>
    <scope>FUNCTION</scope>
    <scope>CHARACTERIZATION OF VARIANTS PHA2D GLU-77; PHE-164; ARG-309; PRO-387 AND CYS-528</scope>
</reference>
<reference key="10">
    <citation type="journal article" date="2013" name="Proc. Natl. Acad. Sci. U.S.A.">
        <title>Kelch-like 3 and Cullin 3 regulate electrolyte homeostasis via ubiquitination and degradation of WNK4.</title>
        <authorList>
            <person name="Shibata S."/>
            <person name="Zhang J."/>
            <person name="Puthumana J."/>
            <person name="Stone K.L."/>
            <person name="Lifton R.P."/>
        </authorList>
    </citation>
    <scope>FUNCTION</scope>
    <scope>IDENTIFICATION IN A BCR (BTB-CUL3-RBX1) E3 UBIQUITIN LIGASE COMPLEX</scope>
    <scope>INTERACTION WITH CUL3</scope>
    <scope>CHARACTERIZATION OF VARIANT PHA2D HIS-528</scope>
</reference>
<reference key="11">
    <citation type="journal article" date="2014" name="Proc. Natl. Acad. Sci. U.S.A.">
        <title>Angiotensin II signaling via protein kinase C phosphorylates Kelch-like 3, preventing WNK4 degradation.</title>
        <authorList>
            <person name="Shibata S."/>
            <person name="Arroyo J.P."/>
            <person name="Castaneda-Bueno M."/>
            <person name="Puthumana J."/>
            <person name="Zhang J."/>
            <person name="Uchida S."/>
            <person name="Stone K.L."/>
            <person name="Lam T.T."/>
            <person name="Lifton R.P."/>
        </authorList>
    </citation>
    <scope>FUNCTION</scope>
    <scope>PHOSPHORYLATION AT SER-433</scope>
    <scope>MUTAGENESIS OF SER-433</scope>
</reference>
<reference key="12">
    <citation type="journal article" date="2015" name="Biochem. Biophys. Res. Commun.">
        <title>Impaired degradation of WNK by Akt and PKA phosphorylation of KLHL3.</title>
        <authorList>
            <person name="Yoshizaki Y."/>
            <person name="Mori Y."/>
            <person name="Tsuzaki Y."/>
            <person name="Mori T."/>
            <person name="Nomura N."/>
            <person name="Wakabayashi M."/>
            <person name="Takahashi D."/>
            <person name="Zeniya M."/>
            <person name="Kikuchi E."/>
            <person name="Araki Y."/>
            <person name="Ando F."/>
            <person name="Isobe K."/>
            <person name="Nishida H."/>
            <person name="Ohta A."/>
            <person name="Susa K."/>
            <person name="Inoue Y."/>
            <person name="Chiga M."/>
            <person name="Rai T."/>
            <person name="Sasaki S."/>
            <person name="Uchida S."/>
            <person name="Sohara E."/>
        </authorList>
    </citation>
    <scope>PHOSPHORYLATION AT SER-10; THR-295; THR-375; SER-376 AND SER-433</scope>
    <scope>CHARACTERIZATION OF VARIANT PHA2D GLY-433</scope>
    <scope>MUTAGENESIS OF SER-433</scope>
</reference>
<reference key="13">
    <citation type="journal article" date="2017" name="Mol. Cell. Biol.">
        <title>KLHL3 knockout mice reveal the physiological role of KLHL3 and the pathophysiology of pseudohypoaldosteronism type II caused by mutant KLHL3.</title>
        <authorList>
            <person name="Sasaki E."/>
            <person name="Susa K."/>
            <person name="Mori T."/>
            <person name="Isobe K."/>
            <person name="Araki Y."/>
            <person name="Inoue Y."/>
            <person name="Yoshizaki Y."/>
            <person name="Ando F."/>
            <person name="Mori Y."/>
            <person name="Mandai S."/>
            <person name="Zeniya M."/>
            <person name="Takahashi D."/>
            <person name="Nomura N."/>
            <person name="Rai T."/>
            <person name="Uchida S."/>
            <person name="Sohara E."/>
        </authorList>
    </citation>
    <scope>SUBUNIT</scope>
    <scope>VARIANT PHA2D HIS-528</scope>
    <scope>CHARACTERIZATION OF VARIANT PHA2D HIS-528</scope>
</reference>
<reference key="14">
    <citation type="journal article" date="2017" name="Protein Sci.">
        <title>Phosphorylation of KLHL3 at serine 433 impairs its interaction with the acidic motif of WNK4: a molecular dynamics study.</title>
        <authorList>
            <person name="Wang L."/>
            <person name="Peng J.B."/>
        </authorList>
    </citation>
    <scope>PHOSPHORYLATION AT SER-433</scope>
</reference>
<reference key="15">
    <citation type="journal article" date="2019" name="Proc. Natl. Acad. Sci. U.S.A.">
        <title>Calcineurin dephosphorylates Kelch-like 3, reversing phosphorylation by angiotensin II and regulating renal electrolyte handling.</title>
        <authorList>
            <person name="Ishizawa K."/>
            <person name="Wang Q."/>
            <person name="Li J."/>
            <person name="Yamazaki O."/>
            <person name="Tamura Y."/>
            <person name="Fujigaki Y."/>
            <person name="Uchida S."/>
            <person name="Lifton R.P."/>
            <person name="Shibata S."/>
        </authorList>
    </citation>
    <scope>PHOSPHORYLATION AT SER-433</scope>
    <scope>DEPHOSPHORYLATION</scope>
    <scope>MUTAGENESIS OF SER-433</scope>
</reference>
<reference key="16">
    <citation type="journal article" date="2013" name="PLoS ONE">
        <title>Crystal structure of KLHL3 in complex with Cullin3.</title>
        <authorList>
            <person name="Ji A.X."/>
            <person name="Prive G.G."/>
        </authorList>
    </citation>
    <scope>X-RAY CRYSTALLOGRAPHY (3.51 ANGSTROMS) OF 24-276 IN COMPLEX WITH CUL3</scope>
</reference>
<reference evidence="28" key="17">
    <citation type="journal article" date="2014" name="Biochem. J.">
        <title>Structural and biochemical characterization of the KLHL3-WNK kinase interaction important in blood pressure regulation.</title>
        <authorList>
            <person name="Schumacher F.R."/>
            <person name="Sorrell F.J."/>
            <person name="Alessi D.R."/>
            <person name="Bullock A.N."/>
            <person name="Kurz T."/>
        </authorList>
    </citation>
    <scope>X-RAY CRYSTALLOGRAPHY (1.56 ANGSTROMS) OF 298-587 IN COMPLEX WITH WNK4</scope>
</reference>
<reference evidence="29" key="18">
    <citation type="journal article" date="2022" name="Biochem. J.">
        <title>Sequence and structural variations determining the recruitment of WNK kinases to the KLHL3 E3 ligase.</title>
        <authorList>
            <person name="Chen Z."/>
            <person name="Zhang J."/>
            <person name="Murillo-de-Ozores A.R."/>
            <person name="Castaneda-Bueno M."/>
            <person name="D'Amico F."/>
            <person name="Heilig R."/>
            <person name="Manning C.E."/>
            <person name="Sorrell F.J."/>
            <person name="D'Angiolella V."/>
            <person name="Fischer R."/>
            <person name="Mulder M.P.C."/>
            <person name="Gamba G."/>
            <person name="Alessi D.R."/>
            <person name="Bullock A.N."/>
        </authorList>
    </citation>
    <scope>X-RAY CRYSTALLOGRAPHY (2.80 ANGSTROMS) OF 298-587 IN COMPLEX WITH WNK3</scope>
    <scope>FUNCTION</scope>
    <scope>PATHWAY</scope>
</reference>
<reference key="19">
    <citation type="journal article" date="2012" name="Nature">
        <title>Mutations in kelch-like 3 and cullin 3 cause hypertension and electrolyte abnormalities.</title>
        <authorList>
            <person name="Boyden L.M."/>
            <person name="Choi M."/>
            <person name="Choate K.A."/>
            <person name="Nelson-Williams C.J."/>
            <person name="Farhi A."/>
            <person name="Toka H.R."/>
            <person name="Tikhonova I.R."/>
            <person name="Bjornson R."/>
            <person name="Mane S.M."/>
            <person name="Colussi G."/>
            <person name="Lebel M."/>
            <person name="Gordon R.D."/>
            <person name="Semmekrot B.A."/>
            <person name="Poujol A."/>
            <person name="Valimaki M.J."/>
            <person name="De Ferrari M.E."/>
            <person name="Sanjad S.A."/>
            <person name="Gutkin M."/>
            <person name="Karet F.E."/>
            <person name="Tucci J.R."/>
            <person name="Stockigt J.R."/>
            <person name="Keppler-Noreuil K.M."/>
            <person name="Porter C.C."/>
            <person name="Anand S.K."/>
            <person name="Whiteford M.L."/>
            <person name="Davis I.D."/>
            <person name="Dewar S.B."/>
            <person name="Bettinelli A."/>
            <person name="Fadrowski J.J."/>
            <person name="Belsha C.W."/>
            <person name="Hunley T.E."/>
            <person name="Nelson R.D."/>
            <person name="Trachtman H."/>
            <person name="Cole T.R."/>
            <person name="Pinsk M."/>
            <person name="Bockenhauer D."/>
            <person name="Shenoy M."/>
            <person name="Vaidyanathan P."/>
            <person name="Foreman J.W."/>
            <person name="Rasoulpour M."/>
            <person name="Thameem F."/>
            <person name="Al-Shahrouri H.Z."/>
            <person name="Radhakrishnan J."/>
            <person name="Gharavi A.G."/>
            <person name="Goilav B."/>
            <person name="Lifton R.P."/>
        </authorList>
    </citation>
    <scope>VARIANTS PHA2D GLU-77; VAL-78; ALA-85; PHE-164; ARG-309; CYS-322; ILE-336; VAL-340; GLN-384; PRO-387; LEU-410; THR-427; GLN-431; ASN-432; ASN-433; 470-TRP--LEU-587 DEL; THR-494; THR-501; CYS-528; HIS-528; CYS-557 AND TRP-575</scope>
    <scope>VARIANT ILE-438</scope>
</reference>
<reference key="20">
    <citation type="journal article" date="2012" name="Nat. Genet.">
        <title>KLHL3 mutations cause familial hyperkalemic hypertension by impairing ion transport in the distal nephron.</title>
        <authorList>
            <person name="Louis-Dit-Picard H."/>
            <person name="Barc J."/>
            <person name="Trujillano D."/>
            <person name="Miserey-Lenkei S."/>
            <person name="Bouatia-Naji N."/>
            <person name="Pylypenko O."/>
            <person name="Beaurain G."/>
            <person name="Bonnefond A."/>
            <person name="Sand O."/>
            <person name="Simian C."/>
            <person name="Vidal-Petiot E."/>
            <person name="Soukaseum C."/>
            <person name="Mandet C."/>
            <person name="Broux F."/>
            <person name="Chabre O."/>
            <person name="Delahousse M."/>
            <person name="Esnault V."/>
            <person name="Fiquet B."/>
            <person name="Houillier P."/>
            <person name="Bagnis C.I."/>
            <person name="Koenig J."/>
            <person name="Konrad M."/>
            <person name="Landais P."/>
            <person name="Mourani C."/>
            <person name="Niaudet P."/>
            <person name="Probst V."/>
            <person name="Thauvin C."/>
            <person name="Unwin R.J."/>
            <person name="Soroka S.D."/>
            <person name="Ehret G."/>
            <person name="Ossowski S."/>
            <person name="Caulfield M."/>
            <person name="Bruneval P."/>
            <person name="Estivill X."/>
            <person name="Froguel P."/>
            <person name="Hadchouel J."/>
            <person name="Schott J.J."/>
            <person name="Jeunemaitre X."/>
        </authorList>
    </citation>
    <scope>VARIANTS PHA2D GLY-228; MET-361; TRP-362; TRP-384; VAL-398; LEU-410; LEU-426; ASN-432; GLY-433; VAL-500; HIS-528; CYS-528 AND LYS-529</scope>
    <scope>FUNCTION</scope>
    <scope>SUBCELLULAR LOCATION</scope>
    <scope>TISSUE SPECIFICITY</scope>
</reference>
<reference key="21">
    <citation type="journal article" date="2016" name="Clin. Pediatr. Endocrinol.">
        <title>A patient with pseudohypoaldosteronism type II complicated by congenital hypopituitarism carrying a KLHL3 mutation.</title>
        <authorList>
            <person name="Mitani M."/>
            <person name="Furuichi M."/>
            <person name="Narumi S."/>
            <person name="Hasegawa T."/>
            <person name="Chiga M."/>
            <person name="Uchida S."/>
            <person name="Sato S."/>
        </authorList>
    </citation>
    <scope>VARIANT PHA2D PRO-387</scope>
</reference>
<reference key="22">
    <citation type="journal article" date="2016" name="QJM">
        <title>A novel mutation in KLHL3 gene causes familial hyperkalemic hypertension.</title>
        <authorList>
            <person name="Kelly D."/>
            <person name="Rodzlan M.R."/>
            <person name="Jeunemaitre X."/>
            <person name="Wall C."/>
        </authorList>
    </citation>
    <scope>VARIANT PHA2D TYR-498</scope>
</reference>
<reference key="23">
    <citation type="journal article" date="2017" name="Nephron">
        <title>Familial hyperkalemia and hypertension (FHHt) and KLHL3: Description of a family with a new recessive mutation (S553L) compared to a family with a dominant mutation, Q309R, with analysis of urinary sodium chloride cotransporter.</title>
        <authorList>
            <person name="Kliuk-Ben Bassat O."/>
            <person name="Carmon V."/>
            <person name="Hanukoglu A."/>
            <person name="Ganon L."/>
            <person name="Massalha E."/>
            <person name="Holtzman E.J."/>
            <person name="Farfel Z."/>
            <person name="Mayan H."/>
        </authorList>
    </citation>
    <scope>VARIANTS PHA2D ARG-309 AND LEU-553</scope>
</reference>
<reference key="24">
    <citation type="journal article" date="2021" name="BMC Endocr. Disord.">
        <title>A case report of pseudohypoaldosteronism type II with a homozygous KLHL3 variant accompanied by hyperthyroidism.</title>
        <authorList>
            <person name="Zhang R."/>
            <person name="Zhang S."/>
            <person name="Luo Y."/>
            <person name="Li M."/>
            <person name="Wen X."/>
            <person name="Cai X."/>
            <person name="Han X."/>
            <person name="Ji L."/>
        </authorList>
    </citation>
    <scope>VARIANT PHA2D ALA-110</scope>
</reference>
<reference key="25">
    <citation type="journal article" date="2022" name="Nephron">
        <title>A novel homozygous KLHL3 mutation as a cause of autosomal recessive Pseudohypoaldosteronism Type II diagnosed late in life.</title>
        <authorList>
            <person name="Etges A."/>
            <person name="Hellmig N."/>
            <person name="Walenda G."/>
            <person name="Haddad B.G."/>
            <person name="Machtens J.P."/>
            <person name="Morosan T."/>
            <person name="Rump L.C."/>
            <person name="Scholl U.I."/>
        </authorList>
    </citation>
    <scope>VARIANT PHA2D TRP-431</scope>
    <scope>FUNCTION</scope>
    <scope>CHARACTERIZATION OF VARIANT PHA2D TRP-431</scope>
</reference>
<evidence type="ECO:0000250" key="1">
    <source>
        <dbReference type="UniProtKB" id="E0CZ16"/>
    </source>
</evidence>
<evidence type="ECO:0000255" key="2">
    <source>
        <dbReference type="PROSITE-ProRule" id="PRU00037"/>
    </source>
</evidence>
<evidence type="ECO:0000269" key="3">
    <source>
    </source>
</evidence>
<evidence type="ECO:0000269" key="4">
    <source>
    </source>
</evidence>
<evidence type="ECO:0000269" key="5">
    <source>
    </source>
</evidence>
<evidence type="ECO:0000269" key="6">
    <source>
    </source>
</evidence>
<evidence type="ECO:0000269" key="7">
    <source>
    </source>
</evidence>
<evidence type="ECO:0000269" key="8">
    <source>
    </source>
</evidence>
<evidence type="ECO:0000269" key="9">
    <source>
    </source>
</evidence>
<evidence type="ECO:0000269" key="10">
    <source>
    </source>
</evidence>
<evidence type="ECO:0000269" key="11">
    <source>
    </source>
</evidence>
<evidence type="ECO:0000269" key="12">
    <source>
    </source>
</evidence>
<evidence type="ECO:0000269" key="13">
    <source>
    </source>
</evidence>
<evidence type="ECO:0000269" key="14">
    <source>
    </source>
</evidence>
<evidence type="ECO:0000269" key="15">
    <source>
    </source>
</evidence>
<evidence type="ECO:0000269" key="16">
    <source>
    </source>
</evidence>
<evidence type="ECO:0000269" key="17">
    <source>
    </source>
</evidence>
<evidence type="ECO:0000269" key="18">
    <source>
    </source>
</evidence>
<evidence type="ECO:0000269" key="19">
    <source>
    </source>
</evidence>
<evidence type="ECO:0000269" key="20">
    <source>
    </source>
</evidence>
<evidence type="ECO:0000269" key="21">
    <source>
    </source>
</evidence>
<evidence type="ECO:0000303" key="22">
    <source>
    </source>
</evidence>
<evidence type="ECO:0000303" key="23">
    <source>
    </source>
</evidence>
<evidence type="ECO:0000305" key="24"/>
<evidence type="ECO:0000305" key="25">
    <source>
    </source>
</evidence>
<evidence type="ECO:0000305" key="26">
    <source>
    </source>
</evidence>
<evidence type="ECO:0000312" key="27">
    <source>
        <dbReference type="HGNC" id="HGNC:6354"/>
    </source>
</evidence>
<evidence type="ECO:0007744" key="28">
    <source>
        <dbReference type="PDB" id="4CH9"/>
    </source>
</evidence>
<evidence type="ECO:0007744" key="29">
    <source>
        <dbReference type="PDB" id="5NKP"/>
    </source>
</evidence>
<evidence type="ECO:0007829" key="30">
    <source>
        <dbReference type="PDB" id="4CH9"/>
    </source>
</evidence>
<evidence type="ECO:0007829" key="31">
    <source>
        <dbReference type="PDB" id="5NKP"/>
    </source>
</evidence>
<dbReference type="EMBL" id="AF208068">
    <property type="protein sequence ID" value="AAF20938.1"/>
    <property type="molecule type" value="mRNA"/>
</dbReference>
<dbReference type="EMBL" id="AF208069">
    <property type="protein sequence ID" value="AAF20939.1"/>
    <property type="molecule type" value="mRNA"/>
</dbReference>
<dbReference type="EMBL" id="AF208070">
    <property type="protein sequence ID" value="AAF20995.1"/>
    <property type="molecule type" value="mRNA"/>
</dbReference>
<dbReference type="EMBL" id="AB032955">
    <property type="protein sequence ID" value="BAA86443.1"/>
    <property type="status" value="ALT_INIT"/>
    <property type="molecule type" value="mRNA"/>
</dbReference>
<dbReference type="EMBL" id="AK314707">
    <property type="protein sequence ID" value="BAG37254.1"/>
    <property type="molecule type" value="mRNA"/>
</dbReference>
<dbReference type="EMBL" id="AC004021">
    <property type="protein sequence ID" value="AAB97127.1"/>
    <property type="status" value="ALT_SEQ"/>
    <property type="molecule type" value="Genomic_DNA"/>
</dbReference>
<dbReference type="EMBL" id="AC092318">
    <property type="status" value="NOT_ANNOTATED_CDS"/>
    <property type="molecule type" value="Genomic_DNA"/>
</dbReference>
<dbReference type="EMBL" id="AC106775">
    <property type="status" value="NOT_ANNOTATED_CDS"/>
    <property type="molecule type" value="Genomic_DNA"/>
</dbReference>
<dbReference type="EMBL" id="CH471062">
    <property type="protein sequence ID" value="EAW62183.1"/>
    <property type="molecule type" value="Genomic_DNA"/>
</dbReference>
<dbReference type="CCDS" id="CCDS4192.1">
    <molecule id="Q9UH77-1"/>
</dbReference>
<dbReference type="CCDS" id="CCDS58969.1">
    <molecule id="Q9UH77-3"/>
</dbReference>
<dbReference type="CCDS" id="CCDS58970.1">
    <molecule id="Q9UH77-2"/>
</dbReference>
<dbReference type="RefSeq" id="NP_001244123.1">
    <molecule id="Q9UH77-2"/>
    <property type="nucleotide sequence ID" value="NM_001257194.1"/>
</dbReference>
<dbReference type="RefSeq" id="NP_001244124.1">
    <molecule id="Q9UH77-3"/>
    <property type="nucleotide sequence ID" value="NM_001257195.2"/>
</dbReference>
<dbReference type="RefSeq" id="NP_059111.2">
    <molecule id="Q9UH77-1"/>
    <property type="nucleotide sequence ID" value="NM_017415.3"/>
</dbReference>
<dbReference type="PDB" id="4CH9">
    <property type="method" value="X-ray"/>
    <property type="resolution" value="1.84 A"/>
    <property type="chains" value="A/B=298-587"/>
</dbReference>
<dbReference type="PDB" id="4HXI">
    <property type="method" value="X-ray"/>
    <property type="resolution" value="3.51 A"/>
    <property type="chains" value="A=24-276"/>
</dbReference>
<dbReference type="PDB" id="5NKP">
    <property type="method" value="X-ray"/>
    <property type="resolution" value="2.80 A"/>
    <property type="chains" value="A/B=298-587"/>
</dbReference>
<dbReference type="PDBsum" id="4CH9"/>
<dbReference type="PDBsum" id="4HXI"/>
<dbReference type="PDBsum" id="5NKP"/>
<dbReference type="SMR" id="Q9UH77"/>
<dbReference type="BioGRID" id="117637">
    <property type="interactions" value="37"/>
</dbReference>
<dbReference type="ComplexPortal" id="CPX-8041">
    <property type="entry name" value="CRL3 E3 ubiquitin ligase complex, KLHL3 variant"/>
</dbReference>
<dbReference type="CORUM" id="Q9UH77"/>
<dbReference type="ELM" id="Q9UH77"/>
<dbReference type="FunCoup" id="Q9UH77">
    <property type="interactions" value="125"/>
</dbReference>
<dbReference type="IntAct" id="Q9UH77">
    <property type="interactions" value="25"/>
</dbReference>
<dbReference type="MINT" id="Q9UH77"/>
<dbReference type="STRING" id="9606.ENSP00000312397"/>
<dbReference type="TCDB" id="8.A.160.1.5">
    <property type="family name" value="the catenin (catenin) family"/>
</dbReference>
<dbReference type="iPTMnet" id="Q9UH77"/>
<dbReference type="PhosphoSitePlus" id="Q9UH77"/>
<dbReference type="BioMuta" id="KLHL3"/>
<dbReference type="DMDM" id="13431657"/>
<dbReference type="jPOST" id="Q9UH77"/>
<dbReference type="MassIVE" id="Q9UH77"/>
<dbReference type="PaxDb" id="9606-ENSP00000312397"/>
<dbReference type="PeptideAtlas" id="Q9UH77"/>
<dbReference type="ProteomicsDB" id="84282">
    <molecule id="Q9UH77-1"/>
</dbReference>
<dbReference type="ProteomicsDB" id="84283">
    <molecule id="Q9UH77-2"/>
</dbReference>
<dbReference type="ProteomicsDB" id="84284">
    <molecule id="Q9UH77-3"/>
</dbReference>
<dbReference type="Antibodypedia" id="14776">
    <property type="antibodies" value="261 antibodies from 28 providers"/>
</dbReference>
<dbReference type="DNASU" id="26249"/>
<dbReference type="Ensembl" id="ENST00000309755.9">
    <molecule id="Q9UH77-1"/>
    <property type="protein sequence ID" value="ENSP00000312397.4"/>
    <property type="gene ID" value="ENSG00000146021.15"/>
</dbReference>
<dbReference type="Ensembl" id="ENST00000506491.5">
    <molecule id="Q9UH77-3"/>
    <property type="protein sequence ID" value="ENSP00000424828.1"/>
    <property type="gene ID" value="ENSG00000146021.15"/>
</dbReference>
<dbReference type="Ensembl" id="ENST00000508657.5">
    <molecule id="Q9UH77-2"/>
    <property type="protein sequence ID" value="ENSP00000422099.1"/>
    <property type="gene ID" value="ENSG00000146021.15"/>
</dbReference>
<dbReference type="GeneID" id="26249"/>
<dbReference type="KEGG" id="hsa:26249"/>
<dbReference type="MANE-Select" id="ENST00000309755.9">
    <property type="protein sequence ID" value="ENSP00000312397.4"/>
    <property type="RefSeq nucleotide sequence ID" value="NM_017415.3"/>
    <property type="RefSeq protein sequence ID" value="NP_059111.2"/>
</dbReference>
<dbReference type="UCSC" id="uc003lbr.6">
    <molecule id="Q9UH77-1"/>
    <property type="organism name" value="human"/>
</dbReference>
<dbReference type="AGR" id="HGNC:6354"/>
<dbReference type="CTD" id="26249"/>
<dbReference type="DisGeNET" id="26249"/>
<dbReference type="GeneCards" id="KLHL3"/>
<dbReference type="GeneReviews" id="KLHL3"/>
<dbReference type="HGNC" id="HGNC:6354">
    <property type="gene designation" value="KLHL3"/>
</dbReference>
<dbReference type="HPA" id="ENSG00000146021">
    <property type="expression patterns" value="Tissue enhanced (brain)"/>
</dbReference>
<dbReference type="MalaCards" id="KLHL3"/>
<dbReference type="MIM" id="605775">
    <property type="type" value="gene"/>
</dbReference>
<dbReference type="MIM" id="614495">
    <property type="type" value="phenotype"/>
</dbReference>
<dbReference type="neXtProt" id="NX_Q9UH77"/>
<dbReference type="OpenTargets" id="ENSG00000146021"/>
<dbReference type="Orphanet" id="300525">
    <property type="disease" value="Pseudohypoaldosteronism type 2D"/>
</dbReference>
<dbReference type="PharmGKB" id="PA30144"/>
<dbReference type="VEuPathDB" id="HostDB:ENSG00000146021"/>
<dbReference type="eggNOG" id="KOG4441">
    <property type="taxonomic scope" value="Eukaryota"/>
</dbReference>
<dbReference type="GeneTree" id="ENSGT00940000157891"/>
<dbReference type="HOGENOM" id="CLU_004253_14_2_1"/>
<dbReference type="InParanoid" id="Q9UH77"/>
<dbReference type="OMA" id="EVPAHKN"/>
<dbReference type="OrthoDB" id="45365at2759"/>
<dbReference type="PAN-GO" id="Q9UH77">
    <property type="GO annotations" value="4 GO annotations based on evolutionary models"/>
</dbReference>
<dbReference type="PhylomeDB" id="Q9UH77"/>
<dbReference type="TreeFam" id="TF329218"/>
<dbReference type="PathwayCommons" id="Q9UH77"/>
<dbReference type="Reactome" id="R-HSA-8951664">
    <property type="pathway name" value="Neddylation"/>
</dbReference>
<dbReference type="Reactome" id="R-HSA-983168">
    <property type="pathway name" value="Antigen processing: Ubiquitination &amp; Proteasome degradation"/>
</dbReference>
<dbReference type="SignaLink" id="Q9UH77"/>
<dbReference type="SIGNOR" id="Q9UH77"/>
<dbReference type="UniPathway" id="UPA00143"/>
<dbReference type="BioGRID-ORCS" id="26249">
    <property type="hits" value="16 hits in 1184 CRISPR screens"/>
</dbReference>
<dbReference type="ChiTaRS" id="KLHL3">
    <property type="organism name" value="human"/>
</dbReference>
<dbReference type="EvolutionaryTrace" id="Q9UH77"/>
<dbReference type="GeneWiki" id="KLHL3"/>
<dbReference type="GenomeRNAi" id="26249"/>
<dbReference type="Pharos" id="Q9UH77">
    <property type="development level" value="Tbio"/>
</dbReference>
<dbReference type="PRO" id="PR:Q9UH77"/>
<dbReference type="Proteomes" id="UP000005640">
    <property type="component" value="Chromosome 5"/>
</dbReference>
<dbReference type="RNAct" id="Q9UH77">
    <property type="molecule type" value="protein"/>
</dbReference>
<dbReference type="Bgee" id="ENSG00000146021">
    <property type="expression patterns" value="Expressed in cerebellar vermis and 180 other cell types or tissues"/>
</dbReference>
<dbReference type="ExpressionAtlas" id="Q9UH77">
    <property type="expression patterns" value="baseline and differential"/>
</dbReference>
<dbReference type="GO" id="GO:0031463">
    <property type="term" value="C:Cul3-RING ubiquitin ligase complex"/>
    <property type="evidence" value="ECO:0000314"/>
    <property type="project" value="UniProtKB"/>
</dbReference>
<dbReference type="GO" id="GO:0005737">
    <property type="term" value="C:cytoplasm"/>
    <property type="evidence" value="ECO:0000318"/>
    <property type="project" value="GO_Central"/>
</dbReference>
<dbReference type="GO" id="GO:0005856">
    <property type="term" value="C:cytoskeleton"/>
    <property type="evidence" value="ECO:0007669"/>
    <property type="project" value="UniProtKB-SubCell"/>
</dbReference>
<dbReference type="GO" id="GO:0005829">
    <property type="term" value="C:cytosol"/>
    <property type="evidence" value="ECO:0000314"/>
    <property type="project" value="UniProtKB"/>
</dbReference>
<dbReference type="GO" id="GO:0003779">
    <property type="term" value="F:actin binding"/>
    <property type="evidence" value="ECO:0007669"/>
    <property type="project" value="UniProtKB-KW"/>
</dbReference>
<dbReference type="GO" id="GO:0097602">
    <property type="term" value="F:cullin family protein binding"/>
    <property type="evidence" value="ECO:0000353"/>
    <property type="project" value="UniProtKB"/>
</dbReference>
<dbReference type="GO" id="GO:0005198">
    <property type="term" value="F:structural molecule activity"/>
    <property type="evidence" value="ECO:0000304"/>
    <property type="project" value="ProtInc"/>
</dbReference>
<dbReference type="GO" id="GO:1990756">
    <property type="term" value="F:ubiquitin-like ligase-substrate adaptor activity"/>
    <property type="evidence" value="ECO:0000314"/>
    <property type="project" value="UniProtKB"/>
</dbReference>
<dbReference type="GO" id="GO:0072156">
    <property type="term" value="P:distal tubule morphogenesis"/>
    <property type="evidence" value="ECO:0000315"/>
    <property type="project" value="UniProtKB"/>
</dbReference>
<dbReference type="GO" id="GO:0010467">
    <property type="term" value="P:gene expression"/>
    <property type="evidence" value="ECO:0007669"/>
    <property type="project" value="Ensembl"/>
</dbReference>
<dbReference type="GO" id="GO:0016236">
    <property type="term" value="P:macroautophagy"/>
    <property type="evidence" value="ECO:0000304"/>
    <property type="project" value="ARUK-UCL"/>
</dbReference>
<dbReference type="GO" id="GO:0050801">
    <property type="term" value="P:monoatomic ion homeostasis"/>
    <property type="evidence" value="ECO:0000315"/>
    <property type="project" value="UniProtKB"/>
</dbReference>
<dbReference type="GO" id="GO:0055075">
    <property type="term" value="P:potassium ion homeostasis"/>
    <property type="evidence" value="ECO:0007669"/>
    <property type="project" value="Ensembl"/>
</dbReference>
<dbReference type="GO" id="GO:0043161">
    <property type="term" value="P:proteasome-mediated ubiquitin-dependent protein catabolic process"/>
    <property type="evidence" value="ECO:0000314"/>
    <property type="project" value="UniProt"/>
</dbReference>
<dbReference type="GO" id="GO:0070936">
    <property type="term" value="P:protein K48-linked ubiquitination"/>
    <property type="evidence" value="ECO:0000314"/>
    <property type="project" value="UniProtKB"/>
</dbReference>
<dbReference type="GO" id="GO:0016567">
    <property type="term" value="P:protein ubiquitination"/>
    <property type="evidence" value="ECO:0000314"/>
    <property type="project" value="UniProtKB"/>
</dbReference>
<dbReference type="GO" id="GO:0070294">
    <property type="term" value="P:renal sodium ion absorption"/>
    <property type="evidence" value="ECO:0000314"/>
    <property type="project" value="UniProt"/>
</dbReference>
<dbReference type="GO" id="GO:0006511">
    <property type="term" value="P:ubiquitin-dependent protein catabolic process"/>
    <property type="evidence" value="ECO:0000314"/>
    <property type="project" value="UniProtKB"/>
</dbReference>
<dbReference type="CDD" id="cd18513">
    <property type="entry name" value="BACK_KLHL3"/>
    <property type="match status" value="1"/>
</dbReference>
<dbReference type="CDD" id="cd18339">
    <property type="entry name" value="BTB_POZ_KLHL3"/>
    <property type="match status" value="1"/>
</dbReference>
<dbReference type="FunFam" id="1.25.40.420:FF:000001">
    <property type="entry name" value="Kelch-like family member 12"/>
    <property type="match status" value="1"/>
</dbReference>
<dbReference type="FunFam" id="2.120.10.80:FF:000002">
    <property type="entry name" value="Kelch-like family member 2"/>
    <property type="match status" value="1"/>
</dbReference>
<dbReference type="FunFam" id="3.30.710.10:FF:000001">
    <property type="entry name" value="Kelch-like family member 20"/>
    <property type="match status" value="1"/>
</dbReference>
<dbReference type="Gene3D" id="1.25.40.420">
    <property type="match status" value="1"/>
</dbReference>
<dbReference type="Gene3D" id="2.120.10.80">
    <property type="entry name" value="Kelch-type beta propeller"/>
    <property type="match status" value="1"/>
</dbReference>
<dbReference type="Gene3D" id="3.30.710.10">
    <property type="entry name" value="Potassium Channel Kv1.1, Chain A"/>
    <property type="match status" value="1"/>
</dbReference>
<dbReference type="InterPro" id="IPR011705">
    <property type="entry name" value="BACK"/>
</dbReference>
<dbReference type="InterPro" id="IPR017096">
    <property type="entry name" value="BTB-kelch_protein"/>
</dbReference>
<dbReference type="InterPro" id="IPR000210">
    <property type="entry name" value="BTB/POZ_dom"/>
</dbReference>
<dbReference type="InterPro" id="IPR015915">
    <property type="entry name" value="Kelch-typ_b-propeller"/>
</dbReference>
<dbReference type="InterPro" id="IPR006652">
    <property type="entry name" value="Kelch_1"/>
</dbReference>
<dbReference type="InterPro" id="IPR030578">
    <property type="entry name" value="KLHL3_BACK"/>
</dbReference>
<dbReference type="InterPro" id="IPR011333">
    <property type="entry name" value="SKP1/BTB/POZ_sf"/>
</dbReference>
<dbReference type="PANTHER" id="PTHR24412">
    <property type="entry name" value="KELCH PROTEIN"/>
    <property type="match status" value="1"/>
</dbReference>
<dbReference type="PANTHER" id="PTHR24412:SF179">
    <property type="entry name" value="KELCH-LIKE PROTEIN 3"/>
    <property type="match status" value="1"/>
</dbReference>
<dbReference type="Pfam" id="PF07707">
    <property type="entry name" value="BACK"/>
    <property type="match status" value="1"/>
</dbReference>
<dbReference type="Pfam" id="PF00651">
    <property type="entry name" value="BTB"/>
    <property type="match status" value="1"/>
</dbReference>
<dbReference type="Pfam" id="PF01344">
    <property type="entry name" value="Kelch_1"/>
    <property type="match status" value="6"/>
</dbReference>
<dbReference type="PIRSF" id="PIRSF037037">
    <property type="entry name" value="Kelch-like_protein_gigaxonin"/>
    <property type="match status" value="1"/>
</dbReference>
<dbReference type="PRINTS" id="PR00501">
    <property type="entry name" value="KELCHREPEAT"/>
</dbReference>
<dbReference type="SMART" id="SM00875">
    <property type="entry name" value="BACK"/>
    <property type="match status" value="1"/>
</dbReference>
<dbReference type="SMART" id="SM00225">
    <property type="entry name" value="BTB"/>
    <property type="match status" value="1"/>
</dbReference>
<dbReference type="SMART" id="SM00612">
    <property type="entry name" value="Kelch"/>
    <property type="match status" value="6"/>
</dbReference>
<dbReference type="SUPFAM" id="SSF117281">
    <property type="entry name" value="Kelch motif"/>
    <property type="match status" value="1"/>
</dbReference>
<dbReference type="SUPFAM" id="SSF54695">
    <property type="entry name" value="POZ domain"/>
    <property type="match status" value="1"/>
</dbReference>
<dbReference type="PROSITE" id="PS50097">
    <property type="entry name" value="BTB"/>
    <property type="match status" value="1"/>
</dbReference>
<keyword id="KW-0002">3D-structure</keyword>
<keyword id="KW-0009">Actin-binding</keyword>
<keyword id="KW-0025">Alternative splicing</keyword>
<keyword id="KW-0963">Cytoplasm</keyword>
<keyword id="KW-0206">Cytoskeleton</keyword>
<keyword id="KW-0225">Disease variant</keyword>
<keyword id="KW-0880">Kelch repeat</keyword>
<keyword id="KW-0597">Phosphoprotein</keyword>
<keyword id="KW-1267">Proteomics identification</keyword>
<keyword id="KW-1185">Reference proteome</keyword>
<keyword id="KW-0677">Repeat</keyword>
<keyword id="KW-0833">Ubl conjugation pathway</keyword>
<gene>
    <name evidence="23 27" type="primary">KLHL3</name>
    <name evidence="22" type="synonym">KIAA1129</name>
</gene>